<name>YDH2_PLAFS</name>
<dbReference type="EMBL" id="M17028">
    <property type="protein sequence ID" value="AAA29621.1"/>
    <property type="molecule type" value="Genomic_DNA"/>
</dbReference>
<dbReference type="PIR" id="D29653">
    <property type="entry name" value="D29653"/>
</dbReference>
<feature type="chain" id="PRO_0000217195" description="Uncharacterized protein 3' to Asp-rich and His-rich proteins">
    <location>
        <begin position="1"/>
        <end position="78" status="greater than"/>
    </location>
</feature>
<feature type="non-terminal residue">
    <location>
        <position position="78"/>
    </location>
</feature>
<protein>
    <recommendedName>
        <fullName>Uncharacterized protein 3' to Asp-rich and His-rich proteins</fullName>
    </recommendedName>
</protein>
<sequence length="78" mass="9113">MVLVTCNRALAQGDFCLLALIFCHQTCRTPEKHKASQSSAKLVSINISLITSHHRLRHPRRRQHHHRNNFAPTNWYWG</sequence>
<organism>
    <name type="scientific">Plasmodium falciparum (isolate fcm17 / Senegal)</name>
    <dbReference type="NCBI Taxonomy" id="5845"/>
    <lineage>
        <taxon>Eukaryota</taxon>
        <taxon>Sar</taxon>
        <taxon>Alveolata</taxon>
        <taxon>Apicomplexa</taxon>
        <taxon>Aconoidasida</taxon>
        <taxon>Haemosporida</taxon>
        <taxon>Plasmodiidae</taxon>
        <taxon>Plasmodium</taxon>
        <taxon>Plasmodium (Laverania)</taxon>
    </lineage>
</organism>
<reference key="1">
    <citation type="journal article" date="1987" name="Biochem. Biophys. Res. Commun.">
        <title>Cloning and sequencing of Plasmodium falciparum DNA fragments containing repetitive regions potentially coding for histidine-rich proteins: identification of two overlapping reading frames.</title>
        <authorList>
            <person name="Lenstra R."/>
            <person name="D'Auriol L."/>
            <person name="Andrieu B."/>
            <person name="le Bras J."/>
            <person name="Galibert F."/>
        </authorList>
    </citation>
    <scope>NUCLEOTIDE SEQUENCE [GENOMIC DNA]</scope>
</reference>
<accession>P14588</accession>
<proteinExistence type="predicted"/>